<proteinExistence type="inferred from homology"/>
<name>PDXH_CUPNH</name>
<keyword id="KW-0285">Flavoprotein</keyword>
<keyword id="KW-0288">FMN</keyword>
<keyword id="KW-0560">Oxidoreductase</keyword>
<keyword id="KW-0664">Pyridoxine biosynthesis</keyword>
<keyword id="KW-1185">Reference proteome</keyword>
<feature type="chain" id="PRO_0000292319" description="Pyridoxine/pyridoxamine 5'-phosphate oxidase">
    <location>
        <begin position="1"/>
        <end position="212"/>
    </location>
</feature>
<feature type="binding site" evidence="1">
    <location>
        <begin position="8"/>
        <end position="11"/>
    </location>
    <ligand>
        <name>substrate</name>
    </ligand>
</feature>
<feature type="binding site" evidence="1">
    <location>
        <begin position="61"/>
        <end position="66"/>
    </location>
    <ligand>
        <name>FMN</name>
        <dbReference type="ChEBI" id="CHEBI:58210"/>
    </ligand>
</feature>
<feature type="binding site" evidence="1">
    <location>
        <position position="66"/>
    </location>
    <ligand>
        <name>substrate</name>
    </ligand>
</feature>
<feature type="binding site" evidence="1">
    <location>
        <begin position="76"/>
        <end position="77"/>
    </location>
    <ligand>
        <name>FMN</name>
        <dbReference type="ChEBI" id="CHEBI:58210"/>
    </ligand>
</feature>
<feature type="binding site" evidence="1">
    <location>
        <position position="82"/>
    </location>
    <ligand>
        <name>FMN</name>
        <dbReference type="ChEBI" id="CHEBI:58210"/>
    </ligand>
</feature>
<feature type="binding site" evidence="1">
    <location>
        <position position="83"/>
    </location>
    <ligand>
        <name>FMN</name>
        <dbReference type="ChEBI" id="CHEBI:58210"/>
    </ligand>
</feature>
<feature type="binding site" evidence="1">
    <location>
        <position position="105"/>
    </location>
    <ligand>
        <name>FMN</name>
        <dbReference type="ChEBI" id="CHEBI:58210"/>
    </ligand>
</feature>
<feature type="binding site" evidence="1">
    <location>
        <position position="123"/>
    </location>
    <ligand>
        <name>substrate</name>
    </ligand>
</feature>
<feature type="binding site" evidence="1">
    <location>
        <position position="127"/>
    </location>
    <ligand>
        <name>substrate</name>
    </ligand>
</feature>
<feature type="binding site" evidence="1">
    <location>
        <position position="131"/>
    </location>
    <ligand>
        <name>substrate</name>
    </ligand>
</feature>
<feature type="binding site" evidence="1">
    <location>
        <begin position="140"/>
        <end position="141"/>
    </location>
    <ligand>
        <name>FMN</name>
        <dbReference type="ChEBI" id="CHEBI:58210"/>
    </ligand>
</feature>
<feature type="binding site" evidence="1">
    <location>
        <position position="184"/>
    </location>
    <ligand>
        <name>FMN</name>
        <dbReference type="ChEBI" id="CHEBI:58210"/>
    </ligand>
</feature>
<feature type="binding site" evidence="1">
    <location>
        <begin position="190"/>
        <end position="192"/>
    </location>
    <ligand>
        <name>substrate</name>
    </ligand>
</feature>
<feature type="binding site" evidence="1">
    <location>
        <position position="194"/>
    </location>
    <ligand>
        <name>FMN</name>
        <dbReference type="ChEBI" id="CHEBI:58210"/>
    </ligand>
</feature>
<evidence type="ECO:0000255" key="1">
    <source>
        <dbReference type="HAMAP-Rule" id="MF_01629"/>
    </source>
</evidence>
<dbReference type="EC" id="1.4.3.5" evidence="1"/>
<dbReference type="EMBL" id="AM260479">
    <property type="protein sequence ID" value="CAJ93881.1"/>
    <property type="molecule type" value="Genomic_DNA"/>
</dbReference>
<dbReference type="RefSeq" id="WP_010813711.1">
    <property type="nucleotide sequence ID" value="NZ_CP039287.1"/>
</dbReference>
<dbReference type="SMR" id="Q0K7Z0"/>
<dbReference type="STRING" id="381666.H16_A2802"/>
<dbReference type="KEGG" id="reh:H16_A2802"/>
<dbReference type="eggNOG" id="COG0259">
    <property type="taxonomic scope" value="Bacteria"/>
</dbReference>
<dbReference type="HOGENOM" id="CLU_032263_2_2_4"/>
<dbReference type="OrthoDB" id="9780392at2"/>
<dbReference type="UniPathway" id="UPA01068">
    <property type="reaction ID" value="UER00304"/>
</dbReference>
<dbReference type="UniPathway" id="UPA01068">
    <property type="reaction ID" value="UER00305"/>
</dbReference>
<dbReference type="Proteomes" id="UP000008210">
    <property type="component" value="Chromosome 1"/>
</dbReference>
<dbReference type="GO" id="GO:0010181">
    <property type="term" value="F:FMN binding"/>
    <property type="evidence" value="ECO:0007669"/>
    <property type="project" value="UniProtKB-UniRule"/>
</dbReference>
<dbReference type="GO" id="GO:0004733">
    <property type="term" value="F:pyridoxamine phosphate oxidase activity"/>
    <property type="evidence" value="ECO:0007669"/>
    <property type="project" value="UniProtKB-UniRule"/>
</dbReference>
<dbReference type="GO" id="GO:0008615">
    <property type="term" value="P:pyridoxine biosynthetic process"/>
    <property type="evidence" value="ECO:0007669"/>
    <property type="project" value="UniProtKB-KW"/>
</dbReference>
<dbReference type="FunFam" id="2.30.110.10:FF:000005">
    <property type="entry name" value="NAD(P)H-hydrate epimerase"/>
    <property type="match status" value="1"/>
</dbReference>
<dbReference type="Gene3D" id="2.30.110.10">
    <property type="entry name" value="Electron Transport, Fmn-binding Protein, Chain A"/>
    <property type="match status" value="1"/>
</dbReference>
<dbReference type="HAMAP" id="MF_01629">
    <property type="entry name" value="PdxH"/>
    <property type="match status" value="1"/>
</dbReference>
<dbReference type="InterPro" id="IPR000659">
    <property type="entry name" value="Pyridox_Oxase"/>
</dbReference>
<dbReference type="InterPro" id="IPR019740">
    <property type="entry name" value="Pyridox_Oxase_CS"/>
</dbReference>
<dbReference type="InterPro" id="IPR011576">
    <property type="entry name" value="Pyridox_Oxase_N"/>
</dbReference>
<dbReference type="InterPro" id="IPR019576">
    <property type="entry name" value="Pyridoxamine_oxidase_dimer_C"/>
</dbReference>
<dbReference type="InterPro" id="IPR012349">
    <property type="entry name" value="Split_barrel_FMN-bd"/>
</dbReference>
<dbReference type="NCBIfam" id="TIGR00558">
    <property type="entry name" value="pdxH"/>
    <property type="match status" value="1"/>
</dbReference>
<dbReference type="NCBIfam" id="NF004231">
    <property type="entry name" value="PRK05679.1"/>
    <property type="match status" value="1"/>
</dbReference>
<dbReference type="PANTHER" id="PTHR10851:SF0">
    <property type="entry name" value="PYRIDOXINE-5'-PHOSPHATE OXIDASE"/>
    <property type="match status" value="1"/>
</dbReference>
<dbReference type="PANTHER" id="PTHR10851">
    <property type="entry name" value="PYRIDOXINE-5-PHOSPHATE OXIDASE"/>
    <property type="match status" value="1"/>
</dbReference>
<dbReference type="Pfam" id="PF10590">
    <property type="entry name" value="PNP_phzG_C"/>
    <property type="match status" value="1"/>
</dbReference>
<dbReference type="Pfam" id="PF01243">
    <property type="entry name" value="PNPOx_N"/>
    <property type="match status" value="1"/>
</dbReference>
<dbReference type="PIRSF" id="PIRSF000190">
    <property type="entry name" value="Pyd_amn-ph_oxd"/>
    <property type="match status" value="1"/>
</dbReference>
<dbReference type="SUPFAM" id="SSF50475">
    <property type="entry name" value="FMN-binding split barrel"/>
    <property type="match status" value="1"/>
</dbReference>
<dbReference type="PROSITE" id="PS01064">
    <property type="entry name" value="PYRIDOX_OXIDASE"/>
    <property type="match status" value="1"/>
</dbReference>
<gene>
    <name evidence="1" type="primary">pdxH</name>
    <name type="ordered locus">H16_A2802</name>
</gene>
<organism>
    <name type="scientific">Cupriavidus necator (strain ATCC 17699 / DSM 428 / KCTC 22496 / NCIMB 10442 / H16 / Stanier 337)</name>
    <name type="common">Ralstonia eutropha</name>
    <dbReference type="NCBI Taxonomy" id="381666"/>
    <lineage>
        <taxon>Bacteria</taxon>
        <taxon>Pseudomonadati</taxon>
        <taxon>Pseudomonadota</taxon>
        <taxon>Betaproteobacteria</taxon>
        <taxon>Burkholderiales</taxon>
        <taxon>Burkholderiaceae</taxon>
        <taxon>Cupriavidus</taxon>
    </lineage>
</organism>
<reference key="1">
    <citation type="journal article" date="2006" name="Nat. Biotechnol.">
        <title>Genome sequence of the bioplastic-producing 'Knallgas' bacterium Ralstonia eutropha H16.</title>
        <authorList>
            <person name="Pohlmann A."/>
            <person name="Fricke W.F."/>
            <person name="Reinecke F."/>
            <person name="Kusian B."/>
            <person name="Liesegang H."/>
            <person name="Cramm R."/>
            <person name="Eitinger T."/>
            <person name="Ewering C."/>
            <person name="Poetter M."/>
            <person name="Schwartz E."/>
            <person name="Strittmatter A."/>
            <person name="Voss I."/>
            <person name="Gottschalk G."/>
            <person name="Steinbuechel A."/>
            <person name="Friedrich B."/>
            <person name="Bowien B."/>
        </authorList>
    </citation>
    <scope>NUCLEOTIDE SEQUENCE [LARGE SCALE GENOMIC DNA]</scope>
    <source>
        <strain>ATCC 17699 / DSM 428 / KCTC 22496 / NCIMB 10442 / H16 / Stanier 337</strain>
    </source>
</reference>
<accession>Q0K7Z0</accession>
<protein>
    <recommendedName>
        <fullName evidence="1">Pyridoxine/pyridoxamine 5'-phosphate oxidase</fullName>
        <ecNumber evidence="1">1.4.3.5</ecNumber>
    </recommendedName>
    <alternativeName>
        <fullName evidence="1">PNP/PMP oxidase</fullName>
        <shortName evidence="1">PNPOx</shortName>
    </alternativeName>
    <alternativeName>
        <fullName evidence="1">Pyridoxal 5'-phosphate synthase</fullName>
    </alternativeName>
</protein>
<comment type="function">
    <text evidence="1">Catalyzes the oxidation of either pyridoxine 5'-phosphate (PNP) or pyridoxamine 5'-phosphate (PMP) into pyridoxal 5'-phosphate (PLP).</text>
</comment>
<comment type="catalytic activity">
    <reaction evidence="1">
        <text>pyridoxamine 5'-phosphate + O2 + H2O = pyridoxal 5'-phosphate + H2O2 + NH4(+)</text>
        <dbReference type="Rhea" id="RHEA:15817"/>
        <dbReference type="ChEBI" id="CHEBI:15377"/>
        <dbReference type="ChEBI" id="CHEBI:15379"/>
        <dbReference type="ChEBI" id="CHEBI:16240"/>
        <dbReference type="ChEBI" id="CHEBI:28938"/>
        <dbReference type="ChEBI" id="CHEBI:58451"/>
        <dbReference type="ChEBI" id="CHEBI:597326"/>
        <dbReference type="EC" id="1.4.3.5"/>
    </reaction>
</comment>
<comment type="catalytic activity">
    <reaction evidence="1">
        <text>pyridoxine 5'-phosphate + O2 = pyridoxal 5'-phosphate + H2O2</text>
        <dbReference type="Rhea" id="RHEA:15149"/>
        <dbReference type="ChEBI" id="CHEBI:15379"/>
        <dbReference type="ChEBI" id="CHEBI:16240"/>
        <dbReference type="ChEBI" id="CHEBI:58589"/>
        <dbReference type="ChEBI" id="CHEBI:597326"/>
        <dbReference type="EC" id="1.4.3.5"/>
    </reaction>
</comment>
<comment type="cofactor">
    <cofactor evidence="1">
        <name>FMN</name>
        <dbReference type="ChEBI" id="CHEBI:58210"/>
    </cofactor>
    <text evidence="1">Binds 1 FMN per subunit.</text>
</comment>
<comment type="pathway">
    <text evidence="1">Cofactor metabolism; pyridoxal 5'-phosphate salvage; pyridoxal 5'-phosphate from pyridoxamine 5'-phosphate: step 1/1.</text>
</comment>
<comment type="pathway">
    <text evidence="1">Cofactor metabolism; pyridoxal 5'-phosphate salvage; pyridoxal 5'-phosphate from pyridoxine 5'-phosphate: step 1/1.</text>
</comment>
<comment type="subunit">
    <text evidence="1">Homodimer.</text>
</comment>
<comment type="similarity">
    <text evidence="1">Belongs to the pyridoxamine 5'-phosphate oxidase family.</text>
</comment>
<sequence length="212" mass="24081">MTQLADLRRSYVLGSLSETDVAPDPMSQFKRWFDEAVTAKLPEPNAMTLATVDADGQPSARIVLLKGIDDRGFTFFTNYESRKGLDLAANPRAALLFHWVQLERQVRVEGRVEKVSDDESDAYFATRPLGSRVGAWASAQSREVPGRDVLEQREQEYRSKFGENPPRPPHWGGYRLVPTALEFWQGRPSRLHDRIAFRLQPGGDWQIVRLSP</sequence>